<proteinExistence type="inferred from homology"/>
<comment type="function">
    <text evidence="1">Probable mitochondrial mRNA stabilization factor.</text>
</comment>
<comment type="subcellular location">
    <subcellularLocation>
        <location evidence="1">Mitochondrion inner membrane</location>
        <topology evidence="1">Peripheral membrane protein</topology>
        <orientation evidence="1">Matrix side</orientation>
    </subcellularLocation>
</comment>
<comment type="similarity">
    <text evidence="4">Belongs to the ATP25 family.</text>
</comment>
<name>ATP25_LODEL</name>
<reference key="1">
    <citation type="journal article" date="2009" name="Nature">
        <title>Evolution of pathogenicity and sexual reproduction in eight Candida genomes.</title>
        <authorList>
            <person name="Butler G."/>
            <person name="Rasmussen M.D."/>
            <person name="Lin M.F."/>
            <person name="Santos M.A.S."/>
            <person name="Sakthikumar S."/>
            <person name="Munro C.A."/>
            <person name="Rheinbay E."/>
            <person name="Grabherr M."/>
            <person name="Forche A."/>
            <person name="Reedy J.L."/>
            <person name="Agrafioti I."/>
            <person name="Arnaud M.B."/>
            <person name="Bates S."/>
            <person name="Brown A.J.P."/>
            <person name="Brunke S."/>
            <person name="Costanzo M.C."/>
            <person name="Fitzpatrick D.A."/>
            <person name="de Groot P.W.J."/>
            <person name="Harris D."/>
            <person name="Hoyer L.L."/>
            <person name="Hube B."/>
            <person name="Klis F.M."/>
            <person name="Kodira C."/>
            <person name="Lennard N."/>
            <person name="Logue M.E."/>
            <person name="Martin R."/>
            <person name="Neiman A.M."/>
            <person name="Nikolaou E."/>
            <person name="Quail M.A."/>
            <person name="Quinn J."/>
            <person name="Santos M.C."/>
            <person name="Schmitzberger F.F."/>
            <person name="Sherlock G."/>
            <person name="Shah P."/>
            <person name="Silverstein K.A.T."/>
            <person name="Skrzypek M.S."/>
            <person name="Soll D."/>
            <person name="Staggs R."/>
            <person name="Stansfield I."/>
            <person name="Stumpf M.P.H."/>
            <person name="Sudbery P.E."/>
            <person name="Srikantha T."/>
            <person name="Zeng Q."/>
            <person name="Berman J."/>
            <person name="Berriman M."/>
            <person name="Heitman J."/>
            <person name="Gow N.A.R."/>
            <person name="Lorenz M.C."/>
            <person name="Birren B.W."/>
            <person name="Kellis M."/>
            <person name="Cuomo C.A."/>
        </authorList>
    </citation>
    <scope>NUCLEOTIDE SEQUENCE [LARGE SCALE GENOMIC DNA]</scope>
    <source>
        <strain>ATCC 11503 / BCRC 21390 / CBS 2605 / JCM 1781 / NBRC 1676 / NRRL YB-4239</strain>
    </source>
</reference>
<dbReference type="EMBL" id="CH981524">
    <property type="protein sequence ID" value="EDK42084.1"/>
    <property type="molecule type" value="Genomic_DNA"/>
</dbReference>
<dbReference type="RefSeq" id="XP_001527742.1">
    <property type="nucleotide sequence ID" value="XM_001527692.1"/>
</dbReference>
<dbReference type="SMR" id="A5DSC6"/>
<dbReference type="STRING" id="379508.A5DSC6"/>
<dbReference type="GeneID" id="5235864"/>
<dbReference type="KEGG" id="lel:PVL30_000257"/>
<dbReference type="VEuPathDB" id="FungiDB:LELG_00262"/>
<dbReference type="eggNOG" id="ENOG502RGZN">
    <property type="taxonomic scope" value="Eukaryota"/>
</dbReference>
<dbReference type="HOGENOM" id="CLU_454918_0_0_1"/>
<dbReference type="InParanoid" id="A5DSC6"/>
<dbReference type="OMA" id="WLREQMM"/>
<dbReference type="OrthoDB" id="107372at2759"/>
<dbReference type="Proteomes" id="UP000001996">
    <property type="component" value="Unassembled WGS sequence"/>
</dbReference>
<dbReference type="GO" id="GO:0005743">
    <property type="term" value="C:mitochondrial inner membrane"/>
    <property type="evidence" value="ECO:0007669"/>
    <property type="project" value="UniProtKB-SubCell"/>
</dbReference>
<dbReference type="GO" id="GO:0140053">
    <property type="term" value="P:mitochondrial gene expression"/>
    <property type="evidence" value="ECO:0007669"/>
    <property type="project" value="InterPro"/>
</dbReference>
<dbReference type="GO" id="GO:0048255">
    <property type="term" value="P:mRNA stabilization"/>
    <property type="evidence" value="ECO:0007669"/>
    <property type="project" value="TreeGrafter"/>
</dbReference>
<dbReference type="Gene3D" id="3.30.460.10">
    <property type="entry name" value="Beta Polymerase, domain 2"/>
    <property type="match status" value="1"/>
</dbReference>
<dbReference type="InterPro" id="IPR040152">
    <property type="entry name" value="Atp25"/>
</dbReference>
<dbReference type="InterPro" id="IPR043519">
    <property type="entry name" value="NT_sf"/>
</dbReference>
<dbReference type="PANTHER" id="PTHR28087">
    <property type="entry name" value="ATPASE SYNTHESIS PROTEIN 25, MITOCHONDRIAL"/>
    <property type="match status" value="1"/>
</dbReference>
<dbReference type="PANTHER" id="PTHR28087:SF1">
    <property type="entry name" value="ATPASE SYNTHESIS PROTEIN 25, MITOCHONDRIAL"/>
    <property type="match status" value="1"/>
</dbReference>
<dbReference type="Pfam" id="PF02410">
    <property type="entry name" value="RsfS"/>
    <property type="match status" value="1"/>
</dbReference>
<dbReference type="SUPFAM" id="SSF81301">
    <property type="entry name" value="Nucleotidyltransferase"/>
    <property type="match status" value="1"/>
</dbReference>
<sequence length="632" mass="71845">MASKALLTKTLERSSYLAARFGLRYFSTTLRFHNKQQNDDSIPWYMRSENTSQPEQIDEPLFEDLPENLPNKVKDLLTLLVAKYGLSGVKVIDLALLPTDHPKSLDRQSEEKIVVIASGKSEKHIYKASYDLKQHIKHDWGFQCAIEGMVTNSMSAVERRRLAKRARQGPPATHNEFGINPNTWVRCELPDGVIVHMMSPERREALDLELMYDESIKFNDDSNGNPYTPYNQYLSQNEKLDQSSIFYGLRREFHTSSTTKKTKTTTTTTTTSSSSPSSPQQQSKSTTLDSVYNDFLQEHGDASADVYKARFDKEFSGNTIDDFNRKFLFYKLLHLKSPTTTSLEDVTSTLLDKYSAVNIISQSDDWNLEIVQDVIKYLELLIDTPVTSIDSSTKLNLLSDFIGKVAMFATDDIHLFAIDKFQVLLWALTTNKVCPITAAHVNSIIESKGQTLRVGGSVASIANTPAGNTTANASVATNSLDTRIIENTQGARDVRELLRSVNYDKRGKMPLWLREQMLFTYAQSRNWVYFWKEWRAITQSLQSPSDFINYFVKTLVLLVMVNDKTALKELLSTYWHRVDDGVCFISEFEKNGKQFEDNNQRLALKTALLLLDEAYPGDLIFRNAQNFASSNL</sequence>
<gene>
    <name type="primary">ATP25</name>
    <name type="ORF">LELG_00262</name>
</gene>
<keyword id="KW-0472">Membrane</keyword>
<keyword id="KW-0496">Mitochondrion</keyword>
<keyword id="KW-0999">Mitochondrion inner membrane</keyword>
<keyword id="KW-1185">Reference proteome</keyword>
<keyword id="KW-0809">Transit peptide</keyword>
<accession>A5DSC6</accession>
<protein>
    <recommendedName>
        <fullName>ATPase synthesis protein 25, mitochondrial</fullName>
    </recommendedName>
</protein>
<feature type="transit peptide" description="Mitochondrion" evidence="2">
    <location>
        <begin position="1"/>
        <end position="26"/>
    </location>
</feature>
<feature type="chain" id="PRO_0000404474" description="ATPase synthesis protein 25, mitochondrial">
    <location>
        <begin position="27"/>
        <end position="632"/>
    </location>
</feature>
<feature type="region of interest" description="Disordered" evidence="3">
    <location>
        <begin position="257"/>
        <end position="287"/>
    </location>
</feature>
<organism>
    <name type="scientific">Lodderomyces elongisporus (strain ATCC 11503 / CBS 2605 / JCM 1781 / NBRC 1676 / NRRL YB-4239)</name>
    <name type="common">Yeast</name>
    <name type="synonym">Saccharomyces elongisporus</name>
    <dbReference type="NCBI Taxonomy" id="379508"/>
    <lineage>
        <taxon>Eukaryota</taxon>
        <taxon>Fungi</taxon>
        <taxon>Dikarya</taxon>
        <taxon>Ascomycota</taxon>
        <taxon>Saccharomycotina</taxon>
        <taxon>Pichiomycetes</taxon>
        <taxon>Debaryomycetaceae</taxon>
        <taxon>Candida/Lodderomyces clade</taxon>
        <taxon>Lodderomyces</taxon>
    </lineage>
</organism>
<evidence type="ECO:0000250" key="1"/>
<evidence type="ECO:0000255" key="2"/>
<evidence type="ECO:0000256" key="3">
    <source>
        <dbReference type="SAM" id="MobiDB-lite"/>
    </source>
</evidence>
<evidence type="ECO:0000305" key="4"/>